<organism>
    <name type="scientific">Halalkalibacterium halodurans (strain ATCC BAA-125 / DSM 18197 / FERM 7344 / JCM 9153 / C-125)</name>
    <name type="common">Bacillus halodurans</name>
    <dbReference type="NCBI Taxonomy" id="272558"/>
    <lineage>
        <taxon>Bacteria</taxon>
        <taxon>Bacillati</taxon>
        <taxon>Bacillota</taxon>
        <taxon>Bacilli</taxon>
        <taxon>Bacillales</taxon>
        <taxon>Bacillaceae</taxon>
        <taxon>Halalkalibacterium (ex Joshi et al. 2022)</taxon>
    </lineage>
</organism>
<name>PHNC2_HALH5</name>
<accession>Q9KFL0</accession>
<comment type="function">
    <text evidence="1">Part of the ABC transporter complex PhnCDE involved in phosphonates import. Responsible for energy coupling to the transport system.</text>
</comment>
<comment type="catalytic activity">
    <reaction evidence="1">
        <text>phosphonate(out) + ATP + H2O = phosphonate(in) + ADP + phosphate + H(+)</text>
        <dbReference type="Rhea" id="RHEA:18065"/>
        <dbReference type="ChEBI" id="CHEBI:15377"/>
        <dbReference type="ChEBI" id="CHEBI:15378"/>
        <dbReference type="ChEBI" id="CHEBI:16215"/>
        <dbReference type="ChEBI" id="CHEBI:30616"/>
        <dbReference type="ChEBI" id="CHEBI:43474"/>
        <dbReference type="ChEBI" id="CHEBI:456216"/>
        <dbReference type="EC" id="7.3.2.2"/>
    </reaction>
</comment>
<comment type="subunit">
    <text evidence="1">The complex is composed of two ATP-binding proteins (PhnC), two transmembrane proteins (PhnE) and a solute-binding protein (PhnD).</text>
</comment>
<comment type="subcellular location">
    <subcellularLocation>
        <location evidence="1">Cell membrane</location>
        <topology evidence="1">Peripheral membrane protein</topology>
    </subcellularLocation>
</comment>
<comment type="similarity">
    <text evidence="1">Belongs to the ABC transporter superfamily. Phosphonates importer (TC 3.A.1.9.1) family.</text>
</comment>
<comment type="sequence caution" evidence="2">
    <conflict type="erroneous initiation">
        <sequence resource="EMBL-CDS" id="BAB04188"/>
    </conflict>
</comment>
<sequence length="244" mass="27046">MILRVEGLKKVYPDGTVGIKEINTSIRRGELISVIGPSGAGKSTFLRSINRLVEPTSGAIFVEGENICNARGKKLRQMRRKIGMVFQHYNLIKRSSVLQNVLHGRLGYMSTIKGGLGRFHESDTKRALSILKRVGLEEQALKRADELSGGQQQRVGIARAIAQNPTLILADEPIASLDPTASENVLHYMKTICQEEGITTVVNLHQVEFAKKFADRMIGIKAGKIVFDGTPRELTDYTVDQLYQ</sequence>
<protein>
    <recommendedName>
        <fullName evidence="1">Phosphonates import ATP-binding protein PhnC 2</fullName>
        <ecNumber evidence="1">7.3.2.2</ecNumber>
    </recommendedName>
</protein>
<gene>
    <name evidence="1" type="primary">phnC2</name>
    <name type="ordered locus">BH0469</name>
</gene>
<keyword id="KW-0067">ATP-binding</keyword>
<keyword id="KW-1003">Cell membrane</keyword>
<keyword id="KW-0472">Membrane</keyword>
<keyword id="KW-0547">Nucleotide-binding</keyword>
<keyword id="KW-0918">Phosphonate transport</keyword>
<keyword id="KW-1185">Reference proteome</keyword>
<keyword id="KW-1278">Translocase</keyword>
<keyword id="KW-0813">Transport</keyword>
<feature type="chain" id="PRO_0000092693" description="Phosphonates import ATP-binding protein PhnC 2">
    <location>
        <begin position="1"/>
        <end position="244"/>
    </location>
</feature>
<feature type="domain" description="ABC transporter" evidence="1">
    <location>
        <begin position="3"/>
        <end position="242"/>
    </location>
</feature>
<feature type="binding site" evidence="1">
    <location>
        <begin position="36"/>
        <end position="43"/>
    </location>
    <ligand>
        <name>ATP</name>
        <dbReference type="ChEBI" id="CHEBI:30616"/>
    </ligand>
</feature>
<proteinExistence type="inferred from homology"/>
<evidence type="ECO:0000255" key="1">
    <source>
        <dbReference type="HAMAP-Rule" id="MF_01713"/>
    </source>
</evidence>
<evidence type="ECO:0000305" key="2"/>
<dbReference type="EC" id="7.3.2.2" evidence="1"/>
<dbReference type="EMBL" id="BA000004">
    <property type="protein sequence ID" value="BAB04188.1"/>
    <property type="status" value="ALT_INIT"/>
    <property type="molecule type" value="Genomic_DNA"/>
</dbReference>
<dbReference type="PIR" id="E83708">
    <property type="entry name" value="E83708"/>
</dbReference>
<dbReference type="SMR" id="Q9KFL0"/>
<dbReference type="STRING" id="272558.gene:10726322"/>
<dbReference type="KEGG" id="bha:BH0469"/>
<dbReference type="eggNOG" id="COG3638">
    <property type="taxonomic scope" value="Bacteria"/>
</dbReference>
<dbReference type="HOGENOM" id="CLU_000604_1_22_9"/>
<dbReference type="OrthoDB" id="9802264at2"/>
<dbReference type="Proteomes" id="UP000001258">
    <property type="component" value="Chromosome"/>
</dbReference>
<dbReference type="GO" id="GO:0005886">
    <property type="term" value="C:plasma membrane"/>
    <property type="evidence" value="ECO:0007669"/>
    <property type="project" value="UniProtKB-SubCell"/>
</dbReference>
<dbReference type="GO" id="GO:0015416">
    <property type="term" value="F:ABC-type phosphonate transporter activity"/>
    <property type="evidence" value="ECO:0007669"/>
    <property type="project" value="UniProtKB-EC"/>
</dbReference>
<dbReference type="GO" id="GO:0005524">
    <property type="term" value="F:ATP binding"/>
    <property type="evidence" value="ECO:0007669"/>
    <property type="project" value="UniProtKB-KW"/>
</dbReference>
<dbReference type="GO" id="GO:0016887">
    <property type="term" value="F:ATP hydrolysis activity"/>
    <property type="evidence" value="ECO:0007669"/>
    <property type="project" value="InterPro"/>
</dbReference>
<dbReference type="CDD" id="cd03256">
    <property type="entry name" value="ABC_PhnC_transporter"/>
    <property type="match status" value="1"/>
</dbReference>
<dbReference type="Gene3D" id="3.40.50.300">
    <property type="entry name" value="P-loop containing nucleotide triphosphate hydrolases"/>
    <property type="match status" value="1"/>
</dbReference>
<dbReference type="InterPro" id="IPR003593">
    <property type="entry name" value="AAA+_ATPase"/>
</dbReference>
<dbReference type="InterPro" id="IPR003439">
    <property type="entry name" value="ABC_transporter-like_ATP-bd"/>
</dbReference>
<dbReference type="InterPro" id="IPR017871">
    <property type="entry name" value="ABC_transporter-like_CS"/>
</dbReference>
<dbReference type="InterPro" id="IPR012693">
    <property type="entry name" value="ABC_transpr_PhnC"/>
</dbReference>
<dbReference type="InterPro" id="IPR050086">
    <property type="entry name" value="MetN_ABC_transporter-like"/>
</dbReference>
<dbReference type="InterPro" id="IPR027417">
    <property type="entry name" value="P-loop_NTPase"/>
</dbReference>
<dbReference type="NCBIfam" id="TIGR02315">
    <property type="entry name" value="ABC_phnC"/>
    <property type="match status" value="1"/>
</dbReference>
<dbReference type="PANTHER" id="PTHR43166">
    <property type="entry name" value="AMINO ACID IMPORT ATP-BINDING PROTEIN"/>
    <property type="match status" value="1"/>
</dbReference>
<dbReference type="PANTHER" id="PTHR43166:SF6">
    <property type="entry name" value="PHOSPHONATES IMPORT ATP-BINDING PROTEIN PHNC"/>
    <property type="match status" value="1"/>
</dbReference>
<dbReference type="Pfam" id="PF00005">
    <property type="entry name" value="ABC_tran"/>
    <property type="match status" value="1"/>
</dbReference>
<dbReference type="SMART" id="SM00382">
    <property type="entry name" value="AAA"/>
    <property type="match status" value="1"/>
</dbReference>
<dbReference type="SUPFAM" id="SSF52540">
    <property type="entry name" value="P-loop containing nucleoside triphosphate hydrolases"/>
    <property type="match status" value="1"/>
</dbReference>
<dbReference type="PROSITE" id="PS00211">
    <property type="entry name" value="ABC_TRANSPORTER_1"/>
    <property type="match status" value="1"/>
</dbReference>
<dbReference type="PROSITE" id="PS50893">
    <property type="entry name" value="ABC_TRANSPORTER_2"/>
    <property type="match status" value="1"/>
</dbReference>
<dbReference type="PROSITE" id="PS51249">
    <property type="entry name" value="PHNC"/>
    <property type="match status" value="1"/>
</dbReference>
<reference key="1">
    <citation type="journal article" date="2000" name="Nucleic Acids Res.">
        <title>Complete genome sequence of the alkaliphilic bacterium Bacillus halodurans and genomic sequence comparison with Bacillus subtilis.</title>
        <authorList>
            <person name="Takami H."/>
            <person name="Nakasone K."/>
            <person name="Takaki Y."/>
            <person name="Maeno G."/>
            <person name="Sasaki R."/>
            <person name="Masui N."/>
            <person name="Fuji F."/>
            <person name="Hirama C."/>
            <person name="Nakamura Y."/>
            <person name="Ogasawara N."/>
            <person name="Kuhara S."/>
            <person name="Horikoshi K."/>
        </authorList>
    </citation>
    <scope>NUCLEOTIDE SEQUENCE [LARGE SCALE GENOMIC DNA]</scope>
    <source>
        <strain>ATCC BAA-125 / DSM 18197 / FERM 7344 / JCM 9153 / C-125</strain>
    </source>
</reference>